<accession>A6Q422</accession>
<proteinExistence type="inferred from homology"/>
<name>GRPE_NITSB</name>
<protein>
    <recommendedName>
        <fullName evidence="1">Protein GrpE</fullName>
    </recommendedName>
    <alternativeName>
        <fullName evidence="1">HSP-70 cofactor</fullName>
    </alternativeName>
</protein>
<organism>
    <name type="scientific">Nitratiruptor sp. (strain SB155-2)</name>
    <dbReference type="NCBI Taxonomy" id="387092"/>
    <lineage>
        <taxon>Bacteria</taxon>
        <taxon>Pseudomonadati</taxon>
        <taxon>Campylobacterota</taxon>
        <taxon>Epsilonproteobacteria</taxon>
        <taxon>Nautiliales</taxon>
        <taxon>Nitratiruptoraceae</taxon>
        <taxon>Nitratiruptor</taxon>
    </lineage>
</organism>
<reference key="1">
    <citation type="journal article" date="2007" name="Proc. Natl. Acad. Sci. U.S.A.">
        <title>Deep-sea vent epsilon-proteobacterial genomes provide insights into emergence of pathogens.</title>
        <authorList>
            <person name="Nakagawa S."/>
            <person name="Takaki Y."/>
            <person name="Shimamura S."/>
            <person name="Reysenbach A.-L."/>
            <person name="Takai K."/>
            <person name="Horikoshi K."/>
        </authorList>
    </citation>
    <scope>NUCLEOTIDE SEQUENCE [LARGE SCALE GENOMIC DNA]</scope>
    <source>
        <strain>SB155-2</strain>
    </source>
</reference>
<feature type="chain" id="PRO_1000053609" description="Protein GrpE">
    <location>
        <begin position="1"/>
        <end position="180"/>
    </location>
</feature>
<feature type="region of interest" description="Disordered" evidence="2">
    <location>
        <begin position="1"/>
        <end position="25"/>
    </location>
</feature>
<feature type="compositionally biased region" description="Basic and acidic residues" evidence="2">
    <location>
        <begin position="1"/>
        <end position="19"/>
    </location>
</feature>
<keyword id="KW-0143">Chaperone</keyword>
<keyword id="KW-0963">Cytoplasm</keyword>
<keyword id="KW-1185">Reference proteome</keyword>
<keyword id="KW-0346">Stress response</keyword>
<sequence length="180" mass="20766">MAEKKRAQEQEKVQEDQKMQNEQNECEEVEKKLQECEEKYLRVHADFENTKKRLEREKIQAIEYSLEKFAQDLLPALDSLDMALAAVSHDNLNAEEAVKELKKGIELTIDQFIKAFNKNGIEVIEIEEGGEFNPHLHEAILQVDDAEKKAGQIVQVIQKGYKYKERILRPAKVSVAKGNE</sequence>
<dbReference type="EMBL" id="AP009178">
    <property type="protein sequence ID" value="BAF70231.1"/>
    <property type="molecule type" value="Genomic_DNA"/>
</dbReference>
<dbReference type="RefSeq" id="WP_012082494.1">
    <property type="nucleotide sequence ID" value="NC_009662.1"/>
</dbReference>
<dbReference type="SMR" id="A6Q422"/>
<dbReference type="FunCoup" id="A6Q422">
    <property type="interactions" value="415"/>
</dbReference>
<dbReference type="STRING" id="387092.NIS_1122"/>
<dbReference type="KEGG" id="nis:NIS_1122"/>
<dbReference type="eggNOG" id="COG0576">
    <property type="taxonomic scope" value="Bacteria"/>
</dbReference>
<dbReference type="HOGENOM" id="CLU_057217_6_3_7"/>
<dbReference type="InParanoid" id="A6Q422"/>
<dbReference type="OrthoDB" id="9789811at2"/>
<dbReference type="Proteomes" id="UP000001118">
    <property type="component" value="Chromosome"/>
</dbReference>
<dbReference type="GO" id="GO:0005829">
    <property type="term" value="C:cytosol"/>
    <property type="evidence" value="ECO:0007669"/>
    <property type="project" value="TreeGrafter"/>
</dbReference>
<dbReference type="GO" id="GO:0000774">
    <property type="term" value="F:adenyl-nucleotide exchange factor activity"/>
    <property type="evidence" value="ECO:0007669"/>
    <property type="project" value="InterPro"/>
</dbReference>
<dbReference type="GO" id="GO:0042803">
    <property type="term" value="F:protein homodimerization activity"/>
    <property type="evidence" value="ECO:0007669"/>
    <property type="project" value="InterPro"/>
</dbReference>
<dbReference type="GO" id="GO:0051087">
    <property type="term" value="F:protein-folding chaperone binding"/>
    <property type="evidence" value="ECO:0007669"/>
    <property type="project" value="InterPro"/>
</dbReference>
<dbReference type="GO" id="GO:0051082">
    <property type="term" value="F:unfolded protein binding"/>
    <property type="evidence" value="ECO:0007669"/>
    <property type="project" value="TreeGrafter"/>
</dbReference>
<dbReference type="GO" id="GO:0006457">
    <property type="term" value="P:protein folding"/>
    <property type="evidence" value="ECO:0007669"/>
    <property type="project" value="InterPro"/>
</dbReference>
<dbReference type="CDD" id="cd00446">
    <property type="entry name" value="GrpE"/>
    <property type="match status" value="1"/>
</dbReference>
<dbReference type="FunFam" id="2.30.22.10:FF:000001">
    <property type="entry name" value="Protein GrpE"/>
    <property type="match status" value="1"/>
</dbReference>
<dbReference type="Gene3D" id="3.90.20.20">
    <property type="match status" value="1"/>
</dbReference>
<dbReference type="Gene3D" id="2.30.22.10">
    <property type="entry name" value="Head domain of nucleotide exchange factor GrpE"/>
    <property type="match status" value="1"/>
</dbReference>
<dbReference type="HAMAP" id="MF_01151">
    <property type="entry name" value="GrpE"/>
    <property type="match status" value="1"/>
</dbReference>
<dbReference type="InterPro" id="IPR000740">
    <property type="entry name" value="GrpE"/>
</dbReference>
<dbReference type="InterPro" id="IPR013805">
    <property type="entry name" value="GrpE_coiled_coil"/>
</dbReference>
<dbReference type="InterPro" id="IPR009012">
    <property type="entry name" value="GrpE_head"/>
</dbReference>
<dbReference type="NCBIfam" id="NF010738">
    <property type="entry name" value="PRK14140.1"/>
    <property type="match status" value="1"/>
</dbReference>
<dbReference type="NCBIfam" id="NF010747">
    <property type="entry name" value="PRK14149.1"/>
    <property type="match status" value="1"/>
</dbReference>
<dbReference type="PANTHER" id="PTHR21237">
    <property type="entry name" value="GRPE PROTEIN"/>
    <property type="match status" value="1"/>
</dbReference>
<dbReference type="PANTHER" id="PTHR21237:SF23">
    <property type="entry name" value="GRPE PROTEIN HOMOLOG, MITOCHONDRIAL"/>
    <property type="match status" value="1"/>
</dbReference>
<dbReference type="Pfam" id="PF01025">
    <property type="entry name" value="GrpE"/>
    <property type="match status" value="1"/>
</dbReference>
<dbReference type="PRINTS" id="PR00773">
    <property type="entry name" value="GRPEPROTEIN"/>
</dbReference>
<dbReference type="SUPFAM" id="SSF58014">
    <property type="entry name" value="Coiled-coil domain of nucleotide exchange factor GrpE"/>
    <property type="match status" value="1"/>
</dbReference>
<dbReference type="SUPFAM" id="SSF51064">
    <property type="entry name" value="Head domain of nucleotide exchange factor GrpE"/>
    <property type="match status" value="1"/>
</dbReference>
<dbReference type="PROSITE" id="PS01071">
    <property type="entry name" value="GRPE"/>
    <property type="match status" value="1"/>
</dbReference>
<comment type="function">
    <text evidence="1">Participates actively in the response to hyperosmotic and heat shock by preventing the aggregation of stress-denatured proteins, in association with DnaK and GrpE. It is the nucleotide exchange factor for DnaK and may function as a thermosensor. Unfolded proteins bind initially to DnaJ; upon interaction with the DnaJ-bound protein, DnaK hydrolyzes its bound ATP, resulting in the formation of a stable complex. GrpE releases ADP from DnaK; ATP binding to DnaK triggers the release of the substrate protein, thus completing the reaction cycle. Several rounds of ATP-dependent interactions between DnaJ, DnaK and GrpE are required for fully efficient folding.</text>
</comment>
<comment type="subunit">
    <text evidence="1">Homodimer.</text>
</comment>
<comment type="subcellular location">
    <subcellularLocation>
        <location evidence="1">Cytoplasm</location>
    </subcellularLocation>
</comment>
<comment type="similarity">
    <text evidence="1">Belongs to the GrpE family.</text>
</comment>
<evidence type="ECO:0000255" key="1">
    <source>
        <dbReference type="HAMAP-Rule" id="MF_01151"/>
    </source>
</evidence>
<evidence type="ECO:0000256" key="2">
    <source>
        <dbReference type="SAM" id="MobiDB-lite"/>
    </source>
</evidence>
<gene>
    <name evidence="1" type="primary">grpE</name>
    <name type="ordered locus">NIS_1122</name>
</gene>